<organism>
    <name type="scientific">Komagataella pastoris</name>
    <name type="common">Yeast</name>
    <name type="synonym">Pichia pastoris</name>
    <dbReference type="NCBI Taxonomy" id="4922"/>
    <lineage>
        <taxon>Eukaryota</taxon>
        <taxon>Fungi</taxon>
        <taxon>Dikarya</taxon>
        <taxon>Ascomycota</taxon>
        <taxon>Saccharomycotina</taxon>
        <taxon>Pichiomycetes</taxon>
        <taxon>Pichiales</taxon>
        <taxon>Pichiaceae</taxon>
        <taxon>Komagataella</taxon>
    </lineage>
</organism>
<sequence length="204" mass="23566">MSAEKRLLQEYRSILKEQRQKGSASTLSSNGILDLKPVSEDNFYKWTAKLKGPTDTGYQDAFWELQIDIPSNYPTQPPKFTFIVSDDIPRNRRQRQTNQIQDDDEFEGAEKEVLRHCYRMPHPNIAFNTGEICLDILQAKWTPAWTLSSALTAIVLLLNDPEPLSPLDIDMANLMKINDLKAYNSLIEYYVGRYSIEEEVYILN</sequence>
<protein>
    <recommendedName>
        <fullName evidence="6">E2 ubiquitin-conjugating enzyme PEX4</fullName>
        <ecNumber evidence="4">2.3.2.23</ecNumber>
    </recommendedName>
    <alternativeName>
        <fullName evidence="6">Peroxin-4</fullName>
    </alternativeName>
</protein>
<comment type="function">
    <text evidence="3 4 5">E2 ubiquitin-conjugating enzyme involved in peroxisome biosynthesis (PubMed:11003648, PubMed:8063827). Acts late in peroxisomal matrix protein import, after matrix protein translocation (PubMed:11003648). Required for both monoubiquitination and polyubiquitination of coreceptor PEX20 (PubMed:11003648). polyubiquitination of PEX20 at conserved lysine 'Lys-19' near the N-terminus leads to its and proteasomal degradation, whereas a monoubiquitination at the conserved cysteine 'Cys-8' is essential for its recycling (PubMed:23344950).</text>
</comment>
<comment type="catalytic activity">
    <reaction evidence="4">
        <text>S-ubiquitinyl-[E1 ubiquitin-activating enzyme]-L-cysteine + [E2 ubiquitin-conjugating enzyme]-L-cysteine = [E1 ubiquitin-activating enzyme]-L-cysteine + S-ubiquitinyl-[E2 ubiquitin-conjugating enzyme]-L-cysteine.</text>
        <dbReference type="EC" id="2.3.2.23"/>
    </reaction>
</comment>
<comment type="pathway">
    <text evidence="4">Protein modification; protein ubiquitination.</text>
</comment>
<comment type="subcellular location">
    <subcellularLocation>
        <location evidence="5">Peroxisome membrane</location>
        <topology evidence="5">Peripheral membrane protein</topology>
        <orientation evidence="5">Cytoplasmic side</orientation>
    </subcellularLocation>
</comment>
<comment type="disruption phenotype">
    <text evidence="3">Still contains peroxisomal membrane protein-containing peroxisomes that import residual amounts of peroxisomal matrix proteins.</text>
</comment>
<comment type="similarity">
    <text evidence="8">Belongs to the ubiquitin-conjugating enzyme family.</text>
</comment>
<accession>P49428</accession>
<name>PEX4_PICPA</name>
<dbReference type="EC" id="2.3.2.23" evidence="4"/>
<dbReference type="EMBL" id="U12511">
    <property type="protein sequence ID" value="AAA53634.1"/>
    <property type="molecule type" value="Genomic_DNA"/>
</dbReference>
<dbReference type="PIR" id="A53848">
    <property type="entry name" value="A53848"/>
</dbReference>
<dbReference type="SMR" id="P49428"/>
<dbReference type="UniPathway" id="UPA00143"/>
<dbReference type="GO" id="GO:0005778">
    <property type="term" value="C:peroxisomal membrane"/>
    <property type="evidence" value="ECO:0007669"/>
    <property type="project" value="UniProtKB-SubCell"/>
</dbReference>
<dbReference type="GO" id="GO:0005524">
    <property type="term" value="F:ATP binding"/>
    <property type="evidence" value="ECO:0007669"/>
    <property type="project" value="UniProtKB-KW"/>
</dbReference>
<dbReference type="GO" id="GO:0061631">
    <property type="term" value="F:ubiquitin conjugating enzyme activity"/>
    <property type="evidence" value="ECO:0007669"/>
    <property type="project" value="UniProtKB-EC"/>
</dbReference>
<dbReference type="GO" id="GO:0007031">
    <property type="term" value="P:peroxisome organization"/>
    <property type="evidence" value="ECO:0007669"/>
    <property type="project" value="UniProtKB-KW"/>
</dbReference>
<dbReference type="GO" id="GO:0016567">
    <property type="term" value="P:protein ubiquitination"/>
    <property type="evidence" value="ECO:0007669"/>
    <property type="project" value="UniProtKB-UniPathway"/>
</dbReference>
<dbReference type="CDD" id="cd23812">
    <property type="entry name" value="UBCc_ScPEX4-like"/>
    <property type="match status" value="1"/>
</dbReference>
<dbReference type="Gene3D" id="3.10.110.10">
    <property type="entry name" value="Ubiquitin Conjugating Enzyme"/>
    <property type="match status" value="1"/>
</dbReference>
<dbReference type="InterPro" id="IPR050113">
    <property type="entry name" value="Ub_conjugating_enzyme"/>
</dbReference>
<dbReference type="InterPro" id="IPR000608">
    <property type="entry name" value="UBQ-conjugat_E2_core"/>
</dbReference>
<dbReference type="InterPro" id="IPR023313">
    <property type="entry name" value="UBQ-conjugating_AS"/>
</dbReference>
<dbReference type="InterPro" id="IPR016135">
    <property type="entry name" value="UBQ-conjugating_enzyme/RWD"/>
</dbReference>
<dbReference type="PANTHER" id="PTHR24067">
    <property type="entry name" value="UBIQUITIN-CONJUGATING ENZYME E2"/>
    <property type="match status" value="1"/>
</dbReference>
<dbReference type="Pfam" id="PF00179">
    <property type="entry name" value="UQ_con"/>
    <property type="match status" value="1"/>
</dbReference>
<dbReference type="SMART" id="SM00212">
    <property type="entry name" value="UBCc"/>
    <property type="match status" value="1"/>
</dbReference>
<dbReference type="SUPFAM" id="SSF54495">
    <property type="entry name" value="UBC-like"/>
    <property type="match status" value="1"/>
</dbReference>
<dbReference type="PROSITE" id="PS00183">
    <property type="entry name" value="UBC_1"/>
    <property type="match status" value="1"/>
</dbReference>
<dbReference type="PROSITE" id="PS50127">
    <property type="entry name" value="UBC_2"/>
    <property type="match status" value="1"/>
</dbReference>
<evidence type="ECO:0000255" key="1">
    <source>
        <dbReference type="PROSITE-ProRule" id="PRU00388"/>
    </source>
</evidence>
<evidence type="ECO:0000255" key="2">
    <source>
        <dbReference type="PROSITE-ProRule" id="PRU10133"/>
    </source>
</evidence>
<evidence type="ECO:0000269" key="3">
    <source>
    </source>
</evidence>
<evidence type="ECO:0000269" key="4">
    <source>
    </source>
</evidence>
<evidence type="ECO:0000269" key="5">
    <source>
    </source>
</evidence>
<evidence type="ECO:0000303" key="6">
    <source>
    </source>
</evidence>
<evidence type="ECO:0000303" key="7">
    <source>
    </source>
</evidence>
<evidence type="ECO:0000305" key="8"/>
<gene>
    <name evidence="6" type="primary">PEX4</name>
    <name evidence="7" type="synonym">PAS4</name>
</gene>
<feature type="chain" id="PRO_0000082567" description="E2 ubiquitin-conjugating enzyme PEX4">
    <location>
        <begin position="1"/>
        <end position="204"/>
    </location>
</feature>
<feature type="domain" description="UBC core" evidence="1">
    <location>
        <begin position="2"/>
        <end position="196"/>
    </location>
</feature>
<feature type="active site" description="Glycyl thioester intermediate" evidence="1 2">
    <location>
        <position position="133"/>
    </location>
</feature>
<feature type="mutagenesis site" description="Loss of activity." evidence="3 5">
    <original>C</original>
    <variation>S</variation>
    <variation>A</variation>
    <location>
        <position position="133"/>
    </location>
</feature>
<proteinExistence type="evidence at protein level"/>
<keyword id="KW-0067">ATP-binding</keyword>
<keyword id="KW-0472">Membrane</keyword>
<keyword id="KW-0547">Nucleotide-binding</keyword>
<keyword id="KW-0576">Peroxisome</keyword>
<keyword id="KW-0962">Peroxisome biogenesis</keyword>
<keyword id="KW-0808">Transferase</keyword>
<keyword id="KW-0833">Ubl conjugation pathway</keyword>
<reference key="1">
    <citation type="journal article" date="1994" name="J. Biol. Chem.">
        <title>The Pichia pastoris PAS4 gene encodes a ubiquitin-conjugating enzyme required for peroxisome assembly.</title>
        <authorList>
            <person name="Crane D.I."/>
            <person name="Kalish J.E."/>
            <person name="Gould S.J."/>
        </authorList>
    </citation>
    <scope>NUCLEOTIDE SEQUENCE [GENOMIC DNA]</scope>
    <scope>FUNCTION</scope>
    <scope>MUTAGENESIS OF CYS-133</scope>
    <scope>SUBCELLULAR LOCATION</scope>
</reference>
<reference key="2">
    <citation type="journal article" date="2000" name="Mol. Cell. Biol.">
        <title>The peroxisome biogenesis factors pex4p, pex22p, pex1p, and pex6p act in the terminal steps of peroxisomal matrix protein import.</title>
        <authorList>
            <person name="Collins C.S."/>
            <person name="Kalish J.E."/>
            <person name="Morrell J.C."/>
            <person name="McCaffery J.M."/>
            <person name="Gould S.J."/>
        </authorList>
    </citation>
    <scope>FUNCTION</scope>
    <scope>DISRUPTION PHENOTYPE</scope>
    <scope>MUTAGENESIS OF CYS-133</scope>
</reference>
<reference key="3">
    <citation type="journal article" date="2013" name="J. Biol. Chem.">
        <title>Unique requirements for mono- and polyubiquitination of the peroxisomal targeting signal co-receptor, Pex20.</title>
        <authorList>
            <person name="Liu X."/>
            <person name="Subramani S."/>
        </authorList>
    </citation>
    <scope>FUNCTION</scope>
    <scope>CATALYTIC ACTIVITY</scope>
</reference>